<accession>P12344</accession>
<accession>A5D967</accession>
<accession>Q3T0Q1</accession>
<sequence length="430" mass="47514">MALLHSGRFLSGVAAAFHPGLAAAASARASSWWAHVEMGPPDPILGVTEAFKRDTNSKKMNLGVGAYRDDNGKPYVLPSVRKAEAQIAAKNLDKEYLPIAGLAEFCKASAELALGENNEVLKSGRYVTVQTISGTGALRIGASFLQRFFKFSRDVFLPKPTWGNHTPIFRDAGMQLQSYRYYDPKTCGFDFTGAIEDISKIPAQSVILLHACAHNPTGVDPRPEQWKEMATVVKKNNLFAFFDMAYQGFASGDGNKDAWAVRHFIEQGINVCLCQSYAKNMGLYGERVGAFTVVCKDAEEAKRVESQLKILIRPMYSNPPINGARIASTILTSPDLRKQWLHEVKGMADRIISMRTQLVSNLKKEGSSHNWQHIIDQIGMFCYTGLKPEQVERLTKEFSIYMTKDGRISVAGVTSGNVAYLAHAIHQVTK</sequence>
<name>AATM_BOVIN</name>
<reference key="1">
    <citation type="journal article" date="1995" name="Int. J. Biochem. Cell Biol.">
        <title>Nucleotide sequence of a cDNA coding for bovine mitochondrial aspartate aminotransferase.</title>
        <authorList>
            <person name="Palmisano A."/>
            <person name="Aurilia V."/>
            <person name="Ferrara L."/>
            <person name="Cubellis M.V."/>
            <person name="Sannia G."/>
            <person name="Marino G."/>
        </authorList>
    </citation>
    <scope>NUCLEOTIDE SEQUENCE [MRNA]</scope>
    <source>
        <tissue>Heart</tissue>
    </source>
</reference>
<reference key="2">
    <citation type="journal article" date="2005" name="BMC Genomics">
        <title>Characterization of 954 bovine full-CDS cDNA sequences.</title>
        <authorList>
            <person name="Harhay G.P."/>
            <person name="Sonstegard T.S."/>
            <person name="Keele J.W."/>
            <person name="Heaton M.P."/>
            <person name="Clawson M.L."/>
            <person name="Snelling W.M."/>
            <person name="Wiedmann R.T."/>
            <person name="Van Tassell C.P."/>
            <person name="Smith T.P.L."/>
        </authorList>
    </citation>
    <scope>NUCLEOTIDE SEQUENCE [LARGE SCALE MRNA]</scope>
</reference>
<reference key="3">
    <citation type="submission" date="2005-08" db="EMBL/GenBank/DDBJ databases">
        <authorList>
            <consortium name="NIH - Mammalian Gene Collection (MGC) project"/>
        </authorList>
    </citation>
    <scope>NUCLEOTIDE SEQUENCE [LARGE SCALE MRNA]</scope>
    <source>
        <strain>Crossbred X Angus</strain>
        <tissue>Ileum</tissue>
    </source>
</reference>
<reference key="4">
    <citation type="journal article" date="1979" name="FEBS Lett.">
        <title>Mitochondrial bovine aspartate aminotransferase. Preliminary sequence and crystallographic data.</title>
        <authorList>
            <person name="Capasso S."/>
            <person name="Garzillo A.M."/>
            <person name="Marino G."/>
            <person name="Mazzarella L."/>
            <person name="Pucci P."/>
            <person name="Sannia G."/>
        </authorList>
    </citation>
    <scope>PROTEIN SEQUENCE OF 30-41</scope>
</reference>
<reference key="5">
    <citation type="journal article" date="1976" name="Int. J. Pept. Protein Res.">
        <title>The phosphopyridoxyl peptide from the mitochondrial aspartate aminotransferase of beef kidney.</title>
        <authorList>
            <person name="Bossa F."/>
            <person name="Polidoro G."/>
            <person name="Barra D."/>
            <person name="Liverzani A."/>
            <person name="Scandurra R."/>
        </authorList>
    </citation>
    <scope>PYRIDOXAL PHOSPHATE AT LYS-279</scope>
    <source>
        <tissue>Kidney</tissue>
    </source>
</reference>
<reference key="6">
    <citation type="journal article" date="2011" name="Science">
        <title>Sirt5 is a NAD-dependent protein lysine demalonylase and desuccinylase.</title>
        <authorList>
            <person name="Du J."/>
            <person name="Zhou Y."/>
            <person name="Su X."/>
            <person name="Yu J.J."/>
            <person name="Khan S."/>
            <person name="Jiang H."/>
            <person name="Kim J."/>
            <person name="Woo J."/>
            <person name="Kim J.H."/>
            <person name="Choi B.H."/>
            <person name="He B."/>
            <person name="Chen W."/>
            <person name="Zhang S."/>
            <person name="Cerione R.A."/>
            <person name="Auwerx J."/>
            <person name="Hao Q."/>
            <person name="Lin H."/>
        </authorList>
    </citation>
    <scope>SUCCINYLATION AT LYS-309</scope>
</reference>
<gene>
    <name type="primary">GOT2</name>
</gene>
<evidence type="ECO:0000250" key="1"/>
<evidence type="ECO:0000250" key="2">
    <source>
        <dbReference type="UniProtKB" id="P00505"/>
    </source>
</evidence>
<evidence type="ECO:0000250" key="3">
    <source>
        <dbReference type="UniProtKB" id="P05202"/>
    </source>
</evidence>
<evidence type="ECO:0000269" key="4">
    <source>
    </source>
</evidence>
<evidence type="ECO:0000269" key="5">
    <source>
    </source>
</evidence>
<evidence type="ECO:0000305" key="6"/>
<protein>
    <recommendedName>
        <fullName>Aspartate aminotransferase, mitochondrial</fullName>
        <shortName>mAspAT</shortName>
        <ecNumber>2.6.1.1</ecNumber>
    </recommendedName>
    <alternativeName>
        <fullName>Fatty acid-binding protein</fullName>
        <shortName>FABP-1</shortName>
    </alternativeName>
    <alternativeName>
        <fullName>Glutamate oxaloacetate transaminase 2</fullName>
    </alternativeName>
    <alternativeName>
        <fullName>Kynurenine aminotransferase 4</fullName>
    </alternativeName>
    <alternativeName>
        <fullName>Kynurenine aminotransferase IV</fullName>
    </alternativeName>
    <alternativeName>
        <fullName>Kynurenine--oxoglutarate transaminase 4</fullName>
    </alternativeName>
    <alternativeName>
        <fullName>Kynurenine--oxoglutarate transaminase IV</fullName>
    </alternativeName>
    <alternativeName>
        <fullName>Plasma membrane-associated fatty acid-binding protein</fullName>
        <shortName>FABPpm</shortName>
    </alternativeName>
    <alternativeName>
        <fullName>Transaminase A</fullName>
    </alternativeName>
</protein>
<organism>
    <name type="scientific">Bos taurus</name>
    <name type="common">Bovine</name>
    <dbReference type="NCBI Taxonomy" id="9913"/>
    <lineage>
        <taxon>Eukaryota</taxon>
        <taxon>Metazoa</taxon>
        <taxon>Chordata</taxon>
        <taxon>Craniata</taxon>
        <taxon>Vertebrata</taxon>
        <taxon>Euteleostomi</taxon>
        <taxon>Mammalia</taxon>
        <taxon>Eutheria</taxon>
        <taxon>Laurasiatheria</taxon>
        <taxon>Artiodactyla</taxon>
        <taxon>Ruminantia</taxon>
        <taxon>Pecora</taxon>
        <taxon>Bovidae</taxon>
        <taxon>Bovinae</taxon>
        <taxon>Bos</taxon>
    </lineage>
</organism>
<dbReference type="EC" id="2.6.1.1"/>
<dbReference type="EMBL" id="Z25466">
    <property type="protein sequence ID" value="CAA80960.1"/>
    <property type="molecule type" value="mRNA"/>
</dbReference>
<dbReference type="EMBL" id="BT030486">
    <property type="protein sequence ID" value="ABQ12926.1"/>
    <property type="molecule type" value="mRNA"/>
</dbReference>
<dbReference type="EMBL" id="BC102303">
    <property type="protein sequence ID" value="AAI02304.1"/>
    <property type="molecule type" value="mRNA"/>
</dbReference>
<dbReference type="PIR" id="S35960">
    <property type="entry name" value="S35960"/>
</dbReference>
<dbReference type="RefSeq" id="NP_777231.1">
    <property type="nucleotide sequence ID" value="NM_174806.2"/>
</dbReference>
<dbReference type="SMR" id="P12344"/>
<dbReference type="FunCoup" id="P12344">
    <property type="interactions" value="2630"/>
</dbReference>
<dbReference type="IntAct" id="P12344">
    <property type="interactions" value="1"/>
</dbReference>
<dbReference type="STRING" id="9913.ENSBTAP00000009440"/>
<dbReference type="GlyGen" id="P12344">
    <property type="glycosylation" value="1 site, 1 O-linked glycan (1 site)"/>
</dbReference>
<dbReference type="PaxDb" id="9913-ENSBTAP00000009440"/>
<dbReference type="PeptideAtlas" id="P12344"/>
<dbReference type="Ensembl" id="ENSBTAT00000009440.3">
    <property type="protein sequence ID" value="ENSBTAP00000009440.2"/>
    <property type="gene ID" value="ENSBTAG00000007172.7"/>
</dbReference>
<dbReference type="GeneID" id="286886"/>
<dbReference type="KEGG" id="bta:286886"/>
<dbReference type="CTD" id="2806"/>
<dbReference type="VEuPathDB" id="HostDB:ENSBTAG00000007172"/>
<dbReference type="VGNC" id="VGNC:29503">
    <property type="gene designation" value="GOT2"/>
</dbReference>
<dbReference type="eggNOG" id="KOG1411">
    <property type="taxonomic scope" value="Eukaryota"/>
</dbReference>
<dbReference type="GeneTree" id="ENSGT00950000183082"/>
<dbReference type="HOGENOM" id="CLU_032440_1_2_1"/>
<dbReference type="InParanoid" id="P12344"/>
<dbReference type="OMA" id="VGACTIV"/>
<dbReference type="OrthoDB" id="6752799at2759"/>
<dbReference type="TreeFam" id="TF300641"/>
<dbReference type="Reactome" id="R-BTA-389661">
    <property type="pathway name" value="Glyoxylate metabolism and glycine degradation"/>
</dbReference>
<dbReference type="Reactome" id="R-BTA-8963693">
    <property type="pathway name" value="Aspartate and asparagine metabolism"/>
</dbReference>
<dbReference type="Reactome" id="R-BTA-8964539">
    <property type="pathway name" value="Glutamate and glutamine metabolism"/>
</dbReference>
<dbReference type="Reactome" id="R-BTA-9856872">
    <property type="pathway name" value="Malate-aspartate shuttle"/>
</dbReference>
<dbReference type="Proteomes" id="UP000009136">
    <property type="component" value="Chromosome 18"/>
</dbReference>
<dbReference type="Bgee" id="ENSBTAG00000007172">
    <property type="expression patterns" value="Expressed in corpus luteum and 105 other cell types or tissues"/>
</dbReference>
<dbReference type="GO" id="GO:0009986">
    <property type="term" value="C:cell surface"/>
    <property type="evidence" value="ECO:0000250"/>
    <property type="project" value="AgBase"/>
</dbReference>
<dbReference type="GO" id="GO:0005743">
    <property type="term" value="C:mitochondrial inner membrane"/>
    <property type="evidence" value="ECO:0000250"/>
    <property type="project" value="AgBase"/>
</dbReference>
<dbReference type="GO" id="GO:0005759">
    <property type="term" value="C:mitochondrial matrix"/>
    <property type="evidence" value="ECO:0007669"/>
    <property type="project" value="UniProtKB-SubCell"/>
</dbReference>
<dbReference type="GO" id="GO:0005739">
    <property type="term" value="C:mitochondrion"/>
    <property type="evidence" value="ECO:0000250"/>
    <property type="project" value="UniProtKB"/>
</dbReference>
<dbReference type="GO" id="GO:0005886">
    <property type="term" value="C:plasma membrane"/>
    <property type="evidence" value="ECO:0007669"/>
    <property type="project" value="UniProtKB-SubCell"/>
</dbReference>
<dbReference type="GO" id="GO:0004069">
    <property type="term" value="F:L-aspartate:2-oxoglutarate aminotransferase activity"/>
    <property type="evidence" value="ECO:0000250"/>
    <property type="project" value="UniProtKB"/>
</dbReference>
<dbReference type="GO" id="GO:0030170">
    <property type="term" value="F:pyridoxal phosphate binding"/>
    <property type="evidence" value="ECO:0007669"/>
    <property type="project" value="InterPro"/>
</dbReference>
<dbReference type="GO" id="GO:0006103">
    <property type="term" value="P:2-oxoglutarate metabolic process"/>
    <property type="evidence" value="ECO:0000250"/>
    <property type="project" value="UniProtKB"/>
</dbReference>
<dbReference type="GO" id="GO:0006533">
    <property type="term" value="P:aspartate catabolic process"/>
    <property type="evidence" value="ECO:0000318"/>
    <property type="project" value="GO_Central"/>
</dbReference>
<dbReference type="GO" id="GO:0006531">
    <property type="term" value="P:aspartate metabolic process"/>
    <property type="evidence" value="ECO:0000250"/>
    <property type="project" value="UniProtKB"/>
</dbReference>
<dbReference type="GO" id="GO:0009058">
    <property type="term" value="P:biosynthetic process"/>
    <property type="evidence" value="ECO:0007669"/>
    <property type="project" value="InterPro"/>
</dbReference>
<dbReference type="GO" id="GO:0006536">
    <property type="term" value="P:glutamate metabolic process"/>
    <property type="evidence" value="ECO:0000250"/>
    <property type="project" value="UniProtKB"/>
</dbReference>
<dbReference type="GO" id="GO:0006869">
    <property type="term" value="P:lipid transport"/>
    <property type="evidence" value="ECO:0007669"/>
    <property type="project" value="UniProtKB-KW"/>
</dbReference>
<dbReference type="CDD" id="cd00609">
    <property type="entry name" value="AAT_like"/>
    <property type="match status" value="1"/>
</dbReference>
<dbReference type="FunFam" id="3.40.640.10:FF:000026">
    <property type="entry name" value="Aspartate aminotransferase"/>
    <property type="match status" value="1"/>
</dbReference>
<dbReference type="FunFam" id="3.90.1150.10:FF:000001">
    <property type="entry name" value="Aspartate aminotransferase"/>
    <property type="match status" value="1"/>
</dbReference>
<dbReference type="FunFam" id="3.90.1150.10:FF:000160">
    <property type="entry name" value="Similar to aspartate aminotransferase"/>
    <property type="match status" value="1"/>
</dbReference>
<dbReference type="Gene3D" id="3.90.1150.10">
    <property type="entry name" value="Aspartate Aminotransferase, domain 1"/>
    <property type="match status" value="1"/>
</dbReference>
<dbReference type="Gene3D" id="3.40.640.10">
    <property type="entry name" value="Type I PLP-dependent aspartate aminotransferase-like (Major domain)"/>
    <property type="match status" value="1"/>
</dbReference>
<dbReference type="InterPro" id="IPR004839">
    <property type="entry name" value="Aminotransferase_I/II_large"/>
</dbReference>
<dbReference type="InterPro" id="IPR000796">
    <property type="entry name" value="Asp_trans"/>
</dbReference>
<dbReference type="InterPro" id="IPR004838">
    <property type="entry name" value="NHTrfase_class1_PyrdxlP-BS"/>
</dbReference>
<dbReference type="InterPro" id="IPR015424">
    <property type="entry name" value="PyrdxlP-dep_Trfase"/>
</dbReference>
<dbReference type="InterPro" id="IPR015421">
    <property type="entry name" value="PyrdxlP-dep_Trfase_major"/>
</dbReference>
<dbReference type="InterPro" id="IPR015422">
    <property type="entry name" value="PyrdxlP-dep_Trfase_small"/>
</dbReference>
<dbReference type="NCBIfam" id="NF006719">
    <property type="entry name" value="PRK09257.1"/>
    <property type="match status" value="1"/>
</dbReference>
<dbReference type="PANTHER" id="PTHR11879">
    <property type="entry name" value="ASPARTATE AMINOTRANSFERASE"/>
    <property type="match status" value="1"/>
</dbReference>
<dbReference type="PANTHER" id="PTHR11879:SF22">
    <property type="entry name" value="ASPARTATE AMINOTRANSFERASE, MITOCHONDRIAL"/>
    <property type="match status" value="1"/>
</dbReference>
<dbReference type="Pfam" id="PF00155">
    <property type="entry name" value="Aminotran_1_2"/>
    <property type="match status" value="1"/>
</dbReference>
<dbReference type="PRINTS" id="PR00799">
    <property type="entry name" value="TRANSAMINASE"/>
</dbReference>
<dbReference type="SUPFAM" id="SSF53383">
    <property type="entry name" value="PLP-dependent transferases"/>
    <property type="match status" value="1"/>
</dbReference>
<dbReference type="PROSITE" id="PS00105">
    <property type="entry name" value="AA_TRANSFER_CLASS_1"/>
    <property type="match status" value="1"/>
</dbReference>
<feature type="transit peptide" description="Mitochondrion" evidence="5">
    <location>
        <begin position="1"/>
        <end position="29"/>
    </location>
</feature>
<feature type="chain" id="PRO_0000001214" description="Aspartate aminotransferase, mitochondrial">
    <location>
        <begin position="30"/>
        <end position="430"/>
    </location>
</feature>
<feature type="binding site" evidence="1">
    <location>
        <position position="65"/>
    </location>
    <ligand>
        <name>substrate</name>
    </ligand>
</feature>
<feature type="binding site" evidence="1">
    <location>
        <position position="162"/>
    </location>
    <ligand>
        <name>substrate</name>
    </ligand>
</feature>
<feature type="binding site" evidence="1">
    <location>
        <position position="215"/>
    </location>
    <ligand>
        <name>substrate</name>
    </ligand>
</feature>
<feature type="binding site" evidence="1">
    <location>
        <position position="407"/>
    </location>
    <ligand>
        <name>substrate</name>
    </ligand>
</feature>
<feature type="modified residue" description="Phosphothreonine" evidence="2">
    <location>
        <position position="48"/>
    </location>
</feature>
<feature type="modified residue" description="N6-acetyllysine" evidence="3">
    <location>
        <position position="59"/>
    </location>
</feature>
<feature type="modified residue" description="N6-acetyllysine; alternate" evidence="2">
    <location>
        <position position="73"/>
    </location>
</feature>
<feature type="modified residue" description="N6-succinyllysine; alternate" evidence="3">
    <location>
        <position position="73"/>
    </location>
</feature>
<feature type="modified residue" description="N6-acetyllysine" evidence="3">
    <location>
        <position position="82"/>
    </location>
</feature>
<feature type="modified residue" description="N6-acetyllysine; alternate" evidence="2">
    <location>
        <position position="90"/>
    </location>
</feature>
<feature type="modified residue" description="N6-succinyllysine; alternate" evidence="3">
    <location>
        <position position="90"/>
    </location>
</feature>
<feature type="modified residue" description="3'-nitrotyrosine; alternate" evidence="3">
    <location>
        <position position="96"/>
    </location>
</feature>
<feature type="modified residue" description="Phosphotyrosine; alternate" evidence="2">
    <location>
        <position position="96"/>
    </location>
</feature>
<feature type="modified residue" description="N6-acetyllysine; alternate" evidence="3">
    <location>
        <position position="107"/>
    </location>
</feature>
<feature type="modified residue" description="N6-succinyllysine; alternate" evidence="3">
    <location>
        <position position="107"/>
    </location>
</feature>
<feature type="modified residue" description="N6-acetyllysine; alternate" evidence="3">
    <location>
        <position position="122"/>
    </location>
</feature>
<feature type="modified residue" description="N6-succinyllysine; alternate" evidence="3">
    <location>
        <position position="122"/>
    </location>
</feature>
<feature type="modified residue" description="Phosphoserine" evidence="2">
    <location>
        <position position="143"/>
    </location>
</feature>
<feature type="modified residue" description="N6-acetyllysine; alternate" evidence="2">
    <location>
        <position position="159"/>
    </location>
</feature>
<feature type="modified residue" description="N6-succinyllysine; alternate" evidence="3">
    <location>
        <position position="159"/>
    </location>
</feature>
<feature type="modified residue" description="N6-acetyllysine; alternate" evidence="3">
    <location>
        <position position="185"/>
    </location>
</feature>
<feature type="modified residue" description="N6-succinyllysine; alternate" evidence="3">
    <location>
        <position position="185"/>
    </location>
</feature>
<feature type="modified residue" description="N6-succinyllysine" evidence="3">
    <location>
        <position position="227"/>
    </location>
</feature>
<feature type="modified residue" description="N6-acetyllysine" evidence="2">
    <location>
        <position position="234"/>
    </location>
</feature>
<feature type="modified residue" description="N6-(pyridoxal phosphate)lysine; alternate">
    <location>
        <position position="279"/>
    </location>
</feature>
<feature type="modified residue" description="N6-acetyllysine; alternate" evidence="3">
    <location>
        <position position="279"/>
    </location>
</feature>
<feature type="modified residue" description="N6-acetyllysine; alternate" evidence="2">
    <location>
        <position position="296"/>
    </location>
</feature>
<feature type="modified residue" description="N6-succinyllysine; alternate" evidence="3">
    <location>
        <position position="296"/>
    </location>
</feature>
<feature type="modified residue" description="N6-acetyllysine" evidence="3">
    <location>
        <position position="302"/>
    </location>
</feature>
<feature type="modified residue" description="N6-acetyllysine; alternate" evidence="3">
    <location>
        <position position="309"/>
    </location>
</feature>
<feature type="modified residue" description="N6-succinyllysine; alternate" evidence="4">
    <location>
        <position position="309"/>
    </location>
</feature>
<feature type="modified residue" description="Asymmetric dimethylarginine" evidence="3">
    <location>
        <position position="313"/>
    </location>
</feature>
<feature type="modified residue" description="N6-acetyllysine; alternate" evidence="3">
    <location>
        <position position="338"/>
    </location>
</feature>
<feature type="modified residue" description="N6-succinyllysine; alternate" evidence="3">
    <location>
        <position position="338"/>
    </location>
</feature>
<feature type="modified residue" description="N6-acetyllysine" evidence="3">
    <location>
        <position position="345"/>
    </location>
</feature>
<feature type="modified residue" description="N6-acetyllysine; alternate" evidence="3">
    <location>
        <position position="363"/>
    </location>
</feature>
<feature type="modified residue" description="N6-succinyllysine; alternate" evidence="3">
    <location>
        <position position="363"/>
    </location>
</feature>
<feature type="modified residue" description="N6-acetyllysine" evidence="3">
    <location>
        <position position="364"/>
    </location>
</feature>
<feature type="modified residue" description="N6-acetyllysine" evidence="3">
    <location>
        <position position="387"/>
    </location>
</feature>
<feature type="modified residue" description="N6-acetyllysine; alternate" evidence="2">
    <location>
        <position position="396"/>
    </location>
</feature>
<feature type="modified residue" description="N6-succinyllysine; alternate" evidence="3">
    <location>
        <position position="396"/>
    </location>
</feature>
<feature type="modified residue" description="N6-acetyllysine; alternate" evidence="2">
    <location>
        <position position="404"/>
    </location>
</feature>
<feature type="modified residue" description="N6-succinyllysine; alternate" evidence="3">
    <location>
        <position position="404"/>
    </location>
</feature>
<comment type="function">
    <text evidence="2">Catalyzes the irreversible transamination of the L-tryptophan metabolite L-kynurenine to form kynurenic acid (KA). As a member of the malate-aspartate shuttle, it has a key role in the intracellular NAD(H) redox balance. Is important for metabolite exchange between mitochondria and cytosol, and for amino acid metabolism. Facilitates cellular uptake of long-chain free fatty acids.</text>
</comment>
<comment type="catalytic activity">
    <reaction>
        <text>L-aspartate + 2-oxoglutarate = oxaloacetate + L-glutamate</text>
        <dbReference type="Rhea" id="RHEA:21824"/>
        <dbReference type="ChEBI" id="CHEBI:16452"/>
        <dbReference type="ChEBI" id="CHEBI:16810"/>
        <dbReference type="ChEBI" id="CHEBI:29985"/>
        <dbReference type="ChEBI" id="CHEBI:29991"/>
        <dbReference type="EC" id="2.6.1.1"/>
    </reaction>
</comment>
<comment type="catalytic activity">
    <reaction>
        <text>L-kynurenine + 2-oxoglutarate = 4-(2-aminophenyl)-2,4-dioxobutanoate + L-glutamate</text>
        <dbReference type="Rhea" id="RHEA:20964"/>
        <dbReference type="ChEBI" id="CHEBI:16810"/>
        <dbReference type="ChEBI" id="CHEBI:29985"/>
        <dbReference type="ChEBI" id="CHEBI:57959"/>
        <dbReference type="ChEBI" id="CHEBI:58147"/>
    </reaction>
</comment>
<comment type="cofactor">
    <cofactor>
        <name>pyridoxal 5'-phosphate</name>
        <dbReference type="ChEBI" id="CHEBI:597326"/>
    </cofactor>
</comment>
<comment type="subunit">
    <text>Homodimer.</text>
</comment>
<comment type="subcellular location">
    <subcellularLocation>
        <location>Mitochondrion matrix</location>
    </subcellularLocation>
    <subcellularLocation>
        <location evidence="1">Cell membrane</location>
    </subcellularLocation>
</comment>
<comment type="miscellaneous">
    <text>In eukaryotes there are cytoplasmic, mitochondrial and chloroplastic isozymes.</text>
</comment>
<comment type="similarity">
    <text evidence="6">Belongs to the class-I pyridoxal-phosphate-dependent aminotransferase family.</text>
</comment>
<keyword id="KW-0007">Acetylation</keyword>
<keyword id="KW-0032">Aminotransferase</keyword>
<keyword id="KW-1003">Cell membrane</keyword>
<keyword id="KW-0903">Direct protein sequencing</keyword>
<keyword id="KW-0445">Lipid transport</keyword>
<keyword id="KW-0472">Membrane</keyword>
<keyword id="KW-0488">Methylation</keyword>
<keyword id="KW-0496">Mitochondrion</keyword>
<keyword id="KW-0944">Nitration</keyword>
<keyword id="KW-0597">Phosphoprotein</keyword>
<keyword id="KW-0663">Pyridoxal phosphate</keyword>
<keyword id="KW-1185">Reference proteome</keyword>
<keyword id="KW-0808">Transferase</keyword>
<keyword id="KW-0809">Transit peptide</keyword>
<keyword id="KW-0813">Transport</keyword>
<proteinExistence type="evidence at protein level"/>